<proteinExistence type="inferred from homology"/>
<gene>
    <name evidence="1" type="primary">gatA</name>
    <name type="ordered locus">NIS_1281</name>
</gene>
<protein>
    <recommendedName>
        <fullName evidence="1">Glutamyl-tRNA(Gln) amidotransferase subunit A</fullName>
        <shortName evidence="1">Glu-ADT subunit A</shortName>
        <ecNumber evidence="1">6.3.5.7</ecNumber>
    </recommendedName>
</protein>
<feature type="chain" id="PRO_1000015874" description="Glutamyl-tRNA(Gln) amidotransferase subunit A">
    <location>
        <begin position="1"/>
        <end position="442"/>
    </location>
</feature>
<feature type="active site" description="Charge relay system" evidence="1">
    <location>
        <position position="50"/>
    </location>
</feature>
<feature type="active site" description="Charge relay system" evidence="1">
    <location>
        <position position="125"/>
    </location>
</feature>
<feature type="active site" description="Acyl-ester intermediate" evidence="1">
    <location>
        <position position="149"/>
    </location>
</feature>
<comment type="function">
    <text evidence="1">Allows the formation of correctly charged Gln-tRNA(Gln) through the transamidation of misacylated Glu-tRNA(Gln) in organisms which lack glutaminyl-tRNA synthetase. The reaction takes place in the presence of glutamine and ATP through an activated gamma-phospho-Glu-tRNA(Gln).</text>
</comment>
<comment type="catalytic activity">
    <reaction evidence="1">
        <text>L-glutamyl-tRNA(Gln) + L-glutamine + ATP + H2O = L-glutaminyl-tRNA(Gln) + L-glutamate + ADP + phosphate + H(+)</text>
        <dbReference type="Rhea" id="RHEA:17521"/>
        <dbReference type="Rhea" id="RHEA-COMP:9681"/>
        <dbReference type="Rhea" id="RHEA-COMP:9684"/>
        <dbReference type="ChEBI" id="CHEBI:15377"/>
        <dbReference type="ChEBI" id="CHEBI:15378"/>
        <dbReference type="ChEBI" id="CHEBI:29985"/>
        <dbReference type="ChEBI" id="CHEBI:30616"/>
        <dbReference type="ChEBI" id="CHEBI:43474"/>
        <dbReference type="ChEBI" id="CHEBI:58359"/>
        <dbReference type="ChEBI" id="CHEBI:78520"/>
        <dbReference type="ChEBI" id="CHEBI:78521"/>
        <dbReference type="ChEBI" id="CHEBI:456216"/>
        <dbReference type="EC" id="6.3.5.7"/>
    </reaction>
</comment>
<comment type="subunit">
    <text evidence="1">Heterotrimer of A, B and C subunits.</text>
</comment>
<comment type="similarity">
    <text evidence="1">Belongs to the amidase family. GatA subfamily.</text>
</comment>
<evidence type="ECO:0000255" key="1">
    <source>
        <dbReference type="HAMAP-Rule" id="MF_00120"/>
    </source>
</evidence>
<organism>
    <name type="scientific">Nitratiruptor sp. (strain SB155-2)</name>
    <dbReference type="NCBI Taxonomy" id="387092"/>
    <lineage>
        <taxon>Bacteria</taxon>
        <taxon>Pseudomonadati</taxon>
        <taxon>Campylobacterota</taxon>
        <taxon>Epsilonproteobacteria</taxon>
        <taxon>Nautiliales</taxon>
        <taxon>Nitratiruptoraceae</taxon>
        <taxon>Nitratiruptor</taxon>
    </lineage>
</organism>
<reference key="1">
    <citation type="journal article" date="2007" name="Proc. Natl. Acad. Sci. U.S.A.">
        <title>Deep-sea vent epsilon-proteobacterial genomes provide insights into emergence of pathogens.</title>
        <authorList>
            <person name="Nakagawa S."/>
            <person name="Takaki Y."/>
            <person name="Shimamura S."/>
            <person name="Reysenbach A.-L."/>
            <person name="Takai K."/>
            <person name="Horikoshi K."/>
        </authorList>
    </citation>
    <scope>NUCLEOTIDE SEQUENCE [LARGE SCALE GENOMIC DNA]</scope>
    <source>
        <strain>SB155-2</strain>
    </source>
</reference>
<sequence>MITLKEALSKPKGELQEIKDELKKRAQEQSEINAYVALDESGEGVPVAIKDNIQVDGWEVTCASKILKGYIAPYDATVIQKLRANGLAPFGRTNMDEFAMGSTTETSCYGKTLNPKDTSRVPGGSSGGSAAAVAAGIAIAALGSDTGGSIRQPAAFCGVVGMKPTYGRVSRYGLAAYGSSLDQIGPMTQNVEDAAILYNIIAGSDAKDSTSARIECKPVVPDPKRKLKIGVVPNYVKDASGAIQKAYDKAIEALKQEGHEIIEISLMDAKYDIASYYITAMAEASTNLSRYDGVRYGYRAEAKNLKEMYLKTRSEGFGEEVKRRILLGTFVLSSGYYDAYYIKAQKARHIIKDEYNKVFEKVDLILSPVAPDVAFEFGAMKTPLEMYLSDVYTIGVNLAGLPAISLPVDEHEGLPVGLQLIGKAFDEQTVFDGAMSLENALK</sequence>
<name>GATA_NITSB</name>
<keyword id="KW-0067">ATP-binding</keyword>
<keyword id="KW-0436">Ligase</keyword>
<keyword id="KW-0547">Nucleotide-binding</keyword>
<keyword id="KW-0648">Protein biosynthesis</keyword>
<keyword id="KW-1185">Reference proteome</keyword>
<accession>A6Q4I0</accession>
<dbReference type="EC" id="6.3.5.7" evidence="1"/>
<dbReference type="EMBL" id="AP009178">
    <property type="protein sequence ID" value="BAF70389.1"/>
    <property type="molecule type" value="Genomic_DNA"/>
</dbReference>
<dbReference type="RefSeq" id="WP_012082652.1">
    <property type="nucleotide sequence ID" value="NC_009662.1"/>
</dbReference>
<dbReference type="SMR" id="A6Q4I0"/>
<dbReference type="STRING" id="387092.NIS_1281"/>
<dbReference type="KEGG" id="nis:NIS_1281"/>
<dbReference type="eggNOG" id="COG0154">
    <property type="taxonomic scope" value="Bacteria"/>
</dbReference>
<dbReference type="HOGENOM" id="CLU_009600_0_3_7"/>
<dbReference type="InParanoid" id="A6Q4I0"/>
<dbReference type="OrthoDB" id="9811471at2"/>
<dbReference type="Proteomes" id="UP000001118">
    <property type="component" value="Chromosome"/>
</dbReference>
<dbReference type="GO" id="GO:0030956">
    <property type="term" value="C:glutamyl-tRNA(Gln) amidotransferase complex"/>
    <property type="evidence" value="ECO:0007669"/>
    <property type="project" value="InterPro"/>
</dbReference>
<dbReference type="GO" id="GO:0005524">
    <property type="term" value="F:ATP binding"/>
    <property type="evidence" value="ECO:0007669"/>
    <property type="project" value="UniProtKB-KW"/>
</dbReference>
<dbReference type="GO" id="GO:0050567">
    <property type="term" value="F:glutaminyl-tRNA synthase (glutamine-hydrolyzing) activity"/>
    <property type="evidence" value="ECO:0007669"/>
    <property type="project" value="UniProtKB-UniRule"/>
</dbReference>
<dbReference type="GO" id="GO:0006412">
    <property type="term" value="P:translation"/>
    <property type="evidence" value="ECO:0007669"/>
    <property type="project" value="UniProtKB-UniRule"/>
</dbReference>
<dbReference type="Gene3D" id="3.90.1300.10">
    <property type="entry name" value="Amidase signature (AS) domain"/>
    <property type="match status" value="1"/>
</dbReference>
<dbReference type="HAMAP" id="MF_00120">
    <property type="entry name" value="GatA"/>
    <property type="match status" value="1"/>
</dbReference>
<dbReference type="InterPro" id="IPR000120">
    <property type="entry name" value="Amidase"/>
</dbReference>
<dbReference type="InterPro" id="IPR020556">
    <property type="entry name" value="Amidase_CS"/>
</dbReference>
<dbReference type="InterPro" id="IPR023631">
    <property type="entry name" value="Amidase_dom"/>
</dbReference>
<dbReference type="InterPro" id="IPR036928">
    <property type="entry name" value="AS_sf"/>
</dbReference>
<dbReference type="InterPro" id="IPR004412">
    <property type="entry name" value="GatA"/>
</dbReference>
<dbReference type="NCBIfam" id="TIGR00132">
    <property type="entry name" value="gatA"/>
    <property type="match status" value="1"/>
</dbReference>
<dbReference type="PANTHER" id="PTHR11895:SF151">
    <property type="entry name" value="GLUTAMYL-TRNA(GLN) AMIDOTRANSFERASE SUBUNIT A"/>
    <property type="match status" value="1"/>
</dbReference>
<dbReference type="PANTHER" id="PTHR11895">
    <property type="entry name" value="TRANSAMIDASE"/>
    <property type="match status" value="1"/>
</dbReference>
<dbReference type="Pfam" id="PF01425">
    <property type="entry name" value="Amidase"/>
    <property type="match status" value="1"/>
</dbReference>
<dbReference type="SUPFAM" id="SSF75304">
    <property type="entry name" value="Amidase signature (AS) enzymes"/>
    <property type="match status" value="1"/>
</dbReference>
<dbReference type="PROSITE" id="PS00571">
    <property type="entry name" value="AMIDASES"/>
    <property type="match status" value="1"/>
</dbReference>